<keyword id="KW-0002">3D-structure</keyword>
<keyword id="KW-0067">ATP-binding</keyword>
<keyword id="KW-0547">Nucleotide-binding</keyword>
<comment type="similarity">
    <text evidence="1">Belongs to the UPF0273 family.</text>
</comment>
<comment type="sequence caution" evidence="2">
    <conflict type="erroneous initiation">
        <sequence resource="EMBL-CDS" id="BAA29356"/>
    </conflict>
</comment>
<reference key="1">
    <citation type="journal article" date="1998" name="DNA Res.">
        <title>Complete sequence and gene organization of the genome of a hyper-thermophilic archaebacterium, Pyrococcus horikoshii OT3.</title>
        <authorList>
            <person name="Kawarabayasi Y."/>
            <person name="Sawada M."/>
            <person name="Horikawa H."/>
            <person name="Haikawa Y."/>
            <person name="Hino Y."/>
            <person name="Yamamoto S."/>
            <person name="Sekine M."/>
            <person name="Baba S."/>
            <person name="Kosugi H."/>
            <person name="Hosoyama A."/>
            <person name="Nagai Y."/>
            <person name="Sakai M."/>
            <person name="Ogura K."/>
            <person name="Otsuka R."/>
            <person name="Nakazawa H."/>
            <person name="Takamiya M."/>
            <person name="Ohfuku Y."/>
            <person name="Funahashi T."/>
            <person name="Tanaka T."/>
            <person name="Kudoh Y."/>
            <person name="Yamazaki J."/>
            <person name="Kushida N."/>
            <person name="Oguchi A."/>
            <person name="Aoki K."/>
            <person name="Yoshizawa T."/>
            <person name="Nakamura Y."/>
            <person name="Robb F.T."/>
            <person name="Horikoshi K."/>
            <person name="Masuchi Y."/>
            <person name="Shizuya H."/>
            <person name="Kikuchi H."/>
        </authorList>
    </citation>
    <scope>NUCLEOTIDE SEQUENCE [LARGE SCALE GENOMIC DNA]</scope>
    <source>
        <strain>ATCC 700860 / DSM 12428 / JCM 9974 / NBRC 100139 / OT-3</strain>
    </source>
</reference>
<feature type="chain" id="PRO_0000184590" description="UPF0273 protein PH0284">
    <location>
        <begin position="1"/>
        <end position="247"/>
    </location>
</feature>
<feature type="domain" description="KaiC" evidence="1">
    <location>
        <begin position="3"/>
        <end position="247"/>
    </location>
</feature>
<feature type="binding site" evidence="1">
    <location>
        <begin position="30"/>
        <end position="37"/>
    </location>
    <ligand>
        <name>ATP</name>
        <dbReference type="ChEBI" id="CHEBI:30616"/>
    </ligand>
</feature>
<feature type="helix" evidence="3">
    <location>
        <begin position="12"/>
        <end position="15"/>
    </location>
</feature>
<feature type="turn" evidence="3">
    <location>
        <begin position="16"/>
        <end position="18"/>
    </location>
</feature>
<feature type="strand" evidence="3">
    <location>
        <begin position="19"/>
        <end position="21"/>
    </location>
</feature>
<feature type="strand" evidence="3">
    <location>
        <begin position="25"/>
        <end position="30"/>
    </location>
</feature>
<feature type="helix" evidence="3">
    <location>
        <begin position="36"/>
        <end position="49"/>
    </location>
</feature>
<feature type="strand" evidence="3">
    <location>
        <begin position="54"/>
        <end position="61"/>
    </location>
</feature>
<feature type="helix" evidence="3">
    <location>
        <begin position="63"/>
        <end position="71"/>
    </location>
</feature>
<feature type="turn" evidence="3">
    <location>
        <begin position="72"/>
        <end position="74"/>
    </location>
</feature>
<feature type="helix" evidence="3">
    <location>
        <begin position="78"/>
        <end position="83"/>
    </location>
</feature>
<feature type="strand" evidence="3">
    <location>
        <begin position="85"/>
        <end position="90"/>
    </location>
</feature>
<feature type="turn" evidence="3">
    <location>
        <begin position="93"/>
        <end position="96"/>
    </location>
</feature>
<feature type="helix" evidence="3">
    <location>
        <begin position="113"/>
        <end position="127"/>
    </location>
</feature>
<feature type="strand" evidence="3">
    <location>
        <begin position="131"/>
        <end position="135"/>
    </location>
</feature>
<feature type="helix" evidence="3">
    <location>
        <begin position="138"/>
        <end position="140"/>
    </location>
</feature>
<feature type="turn" evidence="3">
    <location>
        <begin position="141"/>
        <end position="143"/>
    </location>
</feature>
<feature type="helix" evidence="3">
    <location>
        <begin position="145"/>
        <end position="147"/>
    </location>
</feature>
<feature type="helix" evidence="3">
    <location>
        <begin position="148"/>
        <end position="161"/>
    </location>
</feature>
<feature type="strand" evidence="3">
    <location>
        <begin position="165"/>
        <end position="171"/>
    </location>
</feature>
<feature type="helix" evidence="3">
    <location>
        <begin position="184"/>
        <end position="187"/>
    </location>
</feature>
<feature type="strand" evidence="3">
    <location>
        <begin position="188"/>
        <end position="199"/>
    </location>
</feature>
<feature type="strand" evidence="3">
    <location>
        <begin position="202"/>
        <end position="212"/>
    </location>
</feature>
<feature type="strand" evidence="3">
    <location>
        <begin position="222"/>
        <end position="227"/>
    </location>
</feature>
<feature type="strand" evidence="3">
    <location>
        <begin position="230"/>
        <end position="233"/>
    </location>
</feature>
<feature type="strand" evidence="3">
    <location>
        <begin position="242"/>
        <end position="245"/>
    </location>
</feature>
<dbReference type="EMBL" id="BA000001">
    <property type="protein sequence ID" value="BAA29356.1"/>
    <property type="status" value="ALT_INIT"/>
    <property type="molecule type" value="Genomic_DNA"/>
</dbReference>
<dbReference type="PIR" id="E71453">
    <property type="entry name" value="E71453"/>
</dbReference>
<dbReference type="RefSeq" id="WP_048053076.1">
    <property type="nucleotide sequence ID" value="NC_000961.1"/>
</dbReference>
<dbReference type="PDB" id="2DR3">
    <property type="method" value="X-ray"/>
    <property type="resolution" value="2.00 A"/>
    <property type="chains" value="A/B/C/D/E/F=1-247"/>
</dbReference>
<dbReference type="PDBsum" id="2DR3"/>
<dbReference type="SMR" id="O58022"/>
<dbReference type="STRING" id="70601.gene:9377200"/>
<dbReference type="EnsemblBacteria" id="BAA29356">
    <property type="protein sequence ID" value="BAA29356"/>
    <property type="gene ID" value="BAA29356"/>
</dbReference>
<dbReference type="GeneID" id="1444168"/>
<dbReference type="KEGG" id="pho:PH0284"/>
<dbReference type="eggNOG" id="arCOG01171">
    <property type="taxonomic scope" value="Archaea"/>
</dbReference>
<dbReference type="OrthoDB" id="27015at2157"/>
<dbReference type="EvolutionaryTrace" id="O58022"/>
<dbReference type="Proteomes" id="UP000000752">
    <property type="component" value="Chromosome"/>
</dbReference>
<dbReference type="GO" id="GO:0005524">
    <property type="term" value="F:ATP binding"/>
    <property type="evidence" value="ECO:0007669"/>
    <property type="project" value="UniProtKB-UniRule"/>
</dbReference>
<dbReference type="GO" id="GO:0016887">
    <property type="term" value="F:ATP hydrolysis activity"/>
    <property type="evidence" value="ECO:0007669"/>
    <property type="project" value="InterPro"/>
</dbReference>
<dbReference type="CDD" id="cd19486">
    <property type="entry name" value="KaiC_arch"/>
    <property type="match status" value="1"/>
</dbReference>
<dbReference type="Gene3D" id="3.40.50.300">
    <property type="entry name" value="P-loop containing nucleotide triphosphate hydrolases"/>
    <property type="match status" value="1"/>
</dbReference>
<dbReference type="HAMAP" id="MF_01076">
    <property type="entry name" value="UPF0273"/>
    <property type="match status" value="1"/>
</dbReference>
<dbReference type="InterPro" id="IPR003593">
    <property type="entry name" value="AAA+_ATPase"/>
</dbReference>
<dbReference type="InterPro" id="IPR014774">
    <property type="entry name" value="KaiC-like_dom"/>
</dbReference>
<dbReference type="InterPro" id="IPR010624">
    <property type="entry name" value="KaiC_dom"/>
</dbReference>
<dbReference type="InterPro" id="IPR027417">
    <property type="entry name" value="P-loop_NTPase"/>
</dbReference>
<dbReference type="InterPro" id="IPR022475">
    <property type="entry name" value="UPF0273_KaiC-like"/>
</dbReference>
<dbReference type="NCBIfam" id="TIGR03877">
    <property type="entry name" value="thermo_KaiC_1"/>
    <property type="match status" value="1"/>
</dbReference>
<dbReference type="PANTHER" id="PTHR43637">
    <property type="entry name" value="UPF0273 PROTEIN TM_0370"/>
    <property type="match status" value="1"/>
</dbReference>
<dbReference type="PANTHER" id="PTHR43637:SF1">
    <property type="entry name" value="UPF0273 PROTEIN TM_0370"/>
    <property type="match status" value="1"/>
</dbReference>
<dbReference type="Pfam" id="PF06745">
    <property type="entry name" value="ATPase"/>
    <property type="match status" value="1"/>
</dbReference>
<dbReference type="PRINTS" id="PR01874">
    <property type="entry name" value="DNAREPAIRADA"/>
</dbReference>
<dbReference type="SMART" id="SM00382">
    <property type="entry name" value="AAA"/>
    <property type="match status" value="1"/>
</dbReference>
<dbReference type="SUPFAM" id="SSF52540">
    <property type="entry name" value="P-loop containing nucleoside triphosphate hydrolases"/>
    <property type="match status" value="1"/>
</dbReference>
<dbReference type="PROSITE" id="PS51146">
    <property type="entry name" value="KAIC"/>
    <property type="match status" value="1"/>
</dbReference>
<name>Y284_PYRHO</name>
<accession>O58022</accession>
<organism>
    <name type="scientific">Pyrococcus horikoshii (strain ATCC 700860 / DSM 12428 / JCM 9974 / NBRC 100139 / OT-3)</name>
    <dbReference type="NCBI Taxonomy" id="70601"/>
    <lineage>
        <taxon>Archaea</taxon>
        <taxon>Methanobacteriati</taxon>
        <taxon>Methanobacteriota</taxon>
        <taxon>Thermococci</taxon>
        <taxon>Thermococcales</taxon>
        <taxon>Thermococcaceae</taxon>
        <taxon>Pyrococcus</taxon>
    </lineage>
</organism>
<gene>
    <name type="ordered locus">PH0284</name>
</gene>
<protein>
    <recommendedName>
        <fullName evidence="1">UPF0273 protein PH0284</fullName>
    </recommendedName>
</protein>
<proteinExistence type="evidence at protein level"/>
<evidence type="ECO:0000255" key="1">
    <source>
        <dbReference type="HAMAP-Rule" id="MF_01076"/>
    </source>
</evidence>
<evidence type="ECO:0000305" key="2"/>
<evidence type="ECO:0007829" key="3">
    <source>
        <dbReference type="PDB" id="2DR3"/>
    </source>
</evidence>
<sequence length="247" mass="27531">MTRRVKTGIPGVDEILHGGIPERNVVLLSGGPGTGKTIFSQQFLWNGLKMGEPGIYVALEEHPVQVRQNMAQFGWDVKPYEEKGMFAMVDAFTAGIGKSKEYEKYIVHDLTDIREFIEVLRQAIRDINAKRVVVDSVTTLYINKPAMARSIILQLKRVLAGTGCTSIFVSQVSVGERGFGGPGVEHGVDGIIRLDLDEIDGELKRSLIVWKMRGTSHSMRRHPFDITDKGIIVYPDKVLKRGKVLEL</sequence>